<protein>
    <recommendedName>
        <fullName evidence="1">tRNA-specific 2-thiouridylase MnmA</fullName>
        <ecNumber evidence="1">2.8.1.13</ecNumber>
    </recommendedName>
</protein>
<feature type="chain" id="PRO_0000349757" description="tRNA-specific 2-thiouridylase MnmA">
    <location>
        <begin position="1"/>
        <end position="375"/>
    </location>
</feature>
<feature type="region of interest" description="Interaction with target base in tRNA" evidence="1">
    <location>
        <begin position="102"/>
        <end position="104"/>
    </location>
</feature>
<feature type="region of interest" description="Interaction with tRNA" evidence="1">
    <location>
        <begin position="153"/>
        <end position="155"/>
    </location>
</feature>
<feature type="region of interest" description="Interaction with tRNA" evidence="1">
    <location>
        <begin position="315"/>
        <end position="316"/>
    </location>
</feature>
<feature type="active site" description="Nucleophile" evidence="1">
    <location>
        <position position="107"/>
    </location>
</feature>
<feature type="active site" description="Cysteine persulfide intermediate" evidence="1">
    <location>
        <position position="203"/>
    </location>
</feature>
<feature type="binding site" evidence="1">
    <location>
        <begin position="16"/>
        <end position="23"/>
    </location>
    <ligand>
        <name>ATP</name>
        <dbReference type="ChEBI" id="CHEBI:30616"/>
    </ligand>
</feature>
<feature type="binding site" evidence="1">
    <location>
        <position position="42"/>
    </location>
    <ligand>
        <name>ATP</name>
        <dbReference type="ChEBI" id="CHEBI:30616"/>
    </ligand>
</feature>
<feature type="binding site" evidence="1">
    <location>
        <position position="131"/>
    </location>
    <ligand>
        <name>ATP</name>
        <dbReference type="ChEBI" id="CHEBI:30616"/>
    </ligand>
</feature>
<feature type="site" description="Interaction with tRNA" evidence="1">
    <location>
        <position position="132"/>
    </location>
</feature>
<feature type="site" description="Interaction with tRNA" evidence="1">
    <location>
        <position position="347"/>
    </location>
</feature>
<feature type="disulfide bond" description="Alternate" evidence="1">
    <location>
        <begin position="107"/>
        <end position="203"/>
    </location>
</feature>
<accession>A6V4G0</accession>
<gene>
    <name evidence="1" type="primary">mnmA</name>
    <name type="ordered locus">PSPA7_2581</name>
</gene>
<organism>
    <name type="scientific">Pseudomonas paraeruginosa (strain DSM 24068 / PA7)</name>
    <name type="common">Pseudomonas aeruginosa (strain PA7)</name>
    <dbReference type="NCBI Taxonomy" id="381754"/>
    <lineage>
        <taxon>Bacteria</taxon>
        <taxon>Pseudomonadati</taxon>
        <taxon>Pseudomonadota</taxon>
        <taxon>Gammaproteobacteria</taxon>
        <taxon>Pseudomonadales</taxon>
        <taxon>Pseudomonadaceae</taxon>
        <taxon>Pseudomonas</taxon>
        <taxon>Pseudomonas paraeruginosa</taxon>
    </lineage>
</organism>
<dbReference type="EC" id="2.8.1.13" evidence="1"/>
<dbReference type="EMBL" id="CP000744">
    <property type="protein sequence ID" value="ABR86512.1"/>
    <property type="molecule type" value="Genomic_DNA"/>
</dbReference>
<dbReference type="RefSeq" id="WP_012075452.1">
    <property type="nucleotide sequence ID" value="NC_009656.1"/>
</dbReference>
<dbReference type="SMR" id="A6V4G0"/>
<dbReference type="KEGG" id="pap:PSPA7_2581"/>
<dbReference type="HOGENOM" id="CLU_035188_1_0_6"/>
<dbReference type="Proteomes" id="UP000001582">
    <property type="component" value="Chromosome"/>
</dbReference>
<dbReference type="GO" id="GO:0005737">
    <property type="term" value="C:cytoplasm"/>
    <property type="evidence" value="ECO:0007669"/>
    <property type="project" value="UniProtKB-SubCell"/>
</dbReference>
<dbReference type="GO" id="GO:0005524">
    <property type="term" value="F:ATP binding"/>
    <property type="evidence" value="ECO:0007669"/>
    <property type="project" value="UniProtKB-KW"/>
</dbReference>
<dbReference type="GO" id="GO:0000049">
    <property type="term" value="F:tRNA binding"/>
    <property type="evidence" value="ECO:0007669"/>
    <property type="project" value="UniProtKB-KW"/>
</dbReference>
<dbReference type="GO" id="GO:0103016">
    <property type="term" value="F:tRNA-uridine 2-sulfurtransferase activity"/>
    <property type="evidence" value="ECO:0007669"/>
    <property type="project" value="UniProtKB-EC"/>
</dbReference>
<dbReference type="GO" id="GO:0002143">
    <property type="term" value="P:tRNA wobble position uridine thiolation"/>
    <property type="evidence" value="ECO:0007669"/>
    <property type="project" value="TreeGrafter"/>
</dbReference>
<dbReference type="CDD" id="cd01998">
    <property type="entry name" value="MnmA_TRMU-like"/>
    <property type="match status" value="1"/>
</dbReference>
<dbReference type="FunFam" id="2.30.30.280:FF:000001">
    <property type="entry name" value="tRNA-specific 2-thiouridylase MnmA"/>
    <property type="match status" value="1"/>
</dbReference>
<dbReference type="FunFam" id="2.40.30.10:FF:000023">
    <property type="entry name" value="tRNA-specific 2-thiouridylase MnmA"/>
    <property type="match status" value="1"/>
</dbReference>
<dbReference type="FunFam" id="3.40.50.620:FF:000004">
    <property type="entry name" value="tRNA-specific 2-thiouridylase MnmA"/>
    <property type="match status" value="1"/>
</dbReference>
<dbReference type="Gene3D" id="2.30.30.280">
    <property type="entry name" value="Adenine nucleotide alpha hydrolases-like domains"/>
    <property type="match status" value="1"/>
</dbReference>
<dbReference type="Gene3D" id="3.40.50.620">
    <property type="entry name" value="HUPs"/>
    <property type="match status" value="1"/>
</dbReference>
<dbReference type="Gene3D" id="2.40.30.10">
    <property type="entry name" value="Translation factors"/>
    <property type="match status" value="1"/>
</dbReference>
<dbReference type="HAMAP" id="MF_00144">
    <property type="entry name" value="tRNA_thiouridyl_MnmA"/>
    <property type="match status" value="1"/>
</dbReference>
<dbReference type="InterPro" id="IPR004506">
    <property type="entry name" value="MnmA-like"/>
</dbReference>
<dbReference type="InterPro" id="IPR046885">
    <property type="entry name" value="MnmA-like_C"/>
</dbReference>
<dbReference type="InterPro" id="IPR046884">
    <property type="entry name" value="MnmA-like_central"/>
</dbReference>
<dbReference type="InterPro" id="IPR023382">
    <property type="entry name" value="MnmA-like_central_sf"/>
</dbReference>
<dbReference type="InterPro" id="IPR014729">
    <property type="entry name" value="Rossmann-like_a/b/a_fold"/>
</dbReference>
<dbReference type="NCBIfam" id="NF001138">
    <property type="entry name" value="PRK00143.1"/>
    <property type="match status" value="1"/>
</dbReference>
<dbReference type="NCBIfam" id="TIGR00420">
    <property type="entry name" value="trmU"/>
    <property type="match status" value="1"/>
</dbReference>
<dbReference type="PANTHER" id="PTHR11933:SF5">
    <property type="entry name" value="MITOCHONDRIAL TRNA-SPECIFIC 2-THIOURIDYLASE 1"/>
    <property type="match status" value="1"/>
</dbReference>
<dbReference type="PANTHER" id="PTHR11933">
    <property type="entry name" value="TRNA 5-METHYLAMINOMETHYL-2-THIOURIDYLATE -METHYLTRANSFERASE"/>
    <property type="match status" value="1"/>
</dbReference>
<dbReference type="Pfam" id="PF03054">
    <property type="entry name" value="tRNA_Me_trans"/>
    <property type="match status" value="1"/>
</dbReference>
<dbReference type="Pfam" id="PF20258">
    <property type="entry name" value="tRNA_Me_trans_C"/>
    <property type="match status" value="1"/>
</dbReference>
<dbReference type="Pfam" id="PF20259">
    <property type="entry name" value="tRNA_Me_trans_M"/>
    <property type="match status" value="1"/>
</dbReference>
<dbReference type="SUPFAM" id="SSF52402">
    <property type="entry name" value="Adenine nucleotide alpha hydrolases-like"/>
    <property type="match status" value="1"/>
</dbReference>
<name>MNMA_PSEP7</name>
<keyword id="KW-0067">ATP-binding</keyword>
<keyword id="KW-0963">Cytoplasm</keyword>
<keyword id="KW-1015">Disulfide bond</keyword>
<keyword id="KW-0547">Nucleotide-binding</keyword>
<keyword id="KW-0694">RNA-binding</keyword>
<keyword id="KW-0808">Transferase</keyword>
<keyword id="KW-0819">tRNA processing</keyword>
<keyword id="KW-0820">tRNA-binding</keyword>
<proteinExistence type="inferred from homology"/>
<comment type="function">
    <text evidence="1">Catalyzes the 2-thiolation of uridine at the wobble position (U34) of tRNA, leading to the formation of s(2)U34.</text>
</comment>
<comment type="catalytic activity">
    <reaction evidence="1">
        <text>S-sulfanyl-L-cysteinyl-[protein] + uridine(34) in tRNA + AH2 + ATP = 2-thiouridine(34) in tRNA + L-cysteinyl-[protein] + A + AMP + diphosphate + H(+)</text>
        <dbReference type="Rhea" id="RHEA:47032"/>
        <dbReference type="Rhea" id="RHEA-COMP:10131"/>
        <dbReference type="Rhea" id="RHEA-COMP:11726"/>
        <dbReference type="Rhea" id="RHEA-COMP:11727"/>
        <dbReference type="Rhea" id="RHEA-COMP:11728"/>
        <dbReference type="ChEBI" id="CHEBI:13193"/>
        <dbReference type="ChEBI" id="CHEBI:15378"/>
        <dbReference type="ChEBI" id="CHEBI:17499"/>
        <dbReference type="ChEBI" id="CHEBI:29950"/>
        <dbReference type="ChEBI" id="CHEBI:30616"/>
        <dbReference type="ChEBI" id="CHEBI:33019"/>
        <dbReference type="ChEBI" id="CHEBI:61963"/>
        <dbReference type="ChEBI" id="CHEBI:65315"/>
        <dbReference type="ChEBI" id="CHEBI:87170"/>
        <dbReference type="ChEBI" id="CHEBI:456215"/>
        <dbReference type="EC" id="2.8.1.13"/>
    </reaction>
</comment>
<comment type="subcellular location">
    <subcellularLocation>
        <location evidence="1">Cytoplasm</location>
    </subcellularLocation>
</comment>
<comment type="similarity">
    <text evidence="1">Belongs to the MnmA/TRMU family.</text>
</comment>
<sequence>MSESAPTPRRERVIVGMSGGVDSSVSALLLQQQGYQVEGLFMKNWDEDDGTEYCTAREDLADAQAVCDRIGIKLHTANFAAEYWDNVFEHFLAEYKAGRTPNPDILCNREIKFKAFLDYALMLGADLIATGHYVRRRDLDGRTELLKGLDPNKDQSYFLHAVGGEQIARSLFPVGELEKPEVRAIAEKHGLATAKKKDSTGICFIGERRFTDFLKQYLPAQPGDIETTEGKVIGRHSGLMYHTIGQRQGLGIGGLKEAGDDPWYVLGKDLQRNVLLVGQGNDHPLLFSRALLASRIYWVNPVELERPRRLRAKVRYRQSDQDCVLEKTADGYRAVFDEPQRAVTPGQSVVFYDGEVCLGGGVIETAEAWDFGGRP</sequence>
<reference key="1">
    <citation type="submission" date="2007-06" db="EMBL/GenBank/DDBJ databases">
        <authorList>
            <person name="Dodson R.J."/>
            <person name="Harkins D."/>
            <person name="Paulsen I.T."/>
        </authorList>
    </citation>
    <scope>NUCLEOTIDE SEQUENCE [LARGE SCALE GENOMIC DNA]</scope>
    <source>
        <strain>DSM 24068 / PA7</strain>
    </source>
</reference>
<evidence type="ECO:0000255" key="1">
    <source>
        <dbReference type="HAMAP-Rule" id="MF_00144"/>
    </source>
</evidence>